<keyword id="KW-0050">Antiport</keyword>
<keyword id="KW-1003">Cell membrane</keyword>
<keyword id="KW-0375">Hydrogen ion transport</keyword>
<keyword id="KW-0406">Ion transport</keyword>
<keyword id="KW-0472">Membrane</keyword>
<keyword id="KW-0915">Sodium</keyword>
<keyword id="KW-0739">Sodium transport</keyword>
<keyword id="KW-0812">Transmembrane</keyword>
<keyword id="KW-1133">Transmembrane helix</keyword>
<keyword id="KW-0813">Transport</keyword>
<evidence type="ECO:0000250" key="1"/>
<evidence type="ECO:0000255" key="2"/>
<evidence type="ECO:0000305" key="3"/>
<accession>Q5HHD5</accession>
<gene>
    <name type="primary">mnhC1</name>
    <name type="ordered locus">SACOL0953</name>
</gene>
<feature type="chain" id="PRO_0000089147" description="Na(+)/H(+) antiporter subunit C1">
    <location>
        <begin position="1"/>
        <end position="113"/>
    </location>
</feature>
<feature type="transmembrane region" description="Helical" evidence="2">
    <location>
        <begin position="4"/>
        <end position="21"/>
    </location>
</feature>
<feature type="transmembrane region" description="Helical" evidence="2">
    <location>
        <begin position="26"/>
        <end position="48"/>
    </location>
</feature>
<feature type="transmembrane region" description="Helical" evidence="2">
    <location>
        <begin position="68"/>
        <end position="90"/>
    </location>
</feature>
<name>MNHC1_STAAC</name>
<dbReference type="EMBL" id="CP000046">
    <property type="protein sequence ID" value="AAW37921.1"/>
    <property type="molecule type" value="Genomic_DNA"/>
</dbReference>
<dbReference type="RefSeq" id="WP_000402803.1">
    <property type="nucleotide sequence ID" value="NZ_JBGOFO010000002.1"/>
</dbReference>
<dbReference type="SMR" id="Q5HHD5"/>
<dbReference type="GeneID" id="98345271"/>
<dbReference type="KEGG" id="sac:SACOL0953"/>
<dbReference type="HOGENOM" id="CLU_082058_3_1_9"/>
<dbReference type="Proteomes" id="UP000000530">
    <property type="component" value="Chromosome"/>
</dbReference>
<dbReference type="GO" id="GO:0005886">
    <property type="term" value="C:plasma membrane"/>
    <property type="evidence" value="ECO:0007669"/>
    <property type="project" value="UniProtKB-SubCell"/>
</dbReference>
<dbReference type="GO" id="GO:0015297">
    <property type="term" value="F:antiporter activity"/>
    <property type="evidence" value="ECO:0007669"/>
    <property type="project" value="UniProtKB-KW"/>
</dbReference>
<dbReference type="GO" id="GO:0008324">
    <property type="term" value="F:monoatomic cation transmembrane transporter activity"/>
    <property type="evidence" value="ECO:0007669"/>
    <property type="project" value="InterPro"/>
</dbReference>
<dbReference type="GO" id="GO:1902600">
    <property type="term" value="P:proton transmembrane transport"/>
    <property type="evidence" value="ECO:0007669"/>
    <property type="project" value="UniProtKB-KW"/>
</dbReference>
<dbReference type="GO" id="GO:0006814">
    <property type="term" value="P:sodium ion transport"/>
    <property type="evidence" value="ECO:0007669"/>
    <property type="project" value="UniProtKB-KW"/>
</dbReference>
<dbReference type="Gene3D" id="1.10.287.3510">
    <property type="match status" value="1"/>
</dbReference>
<dbReference type="InterPro" id="IPR050601">
    <property type="entry name" value="CPA3_antiporter_subunitC"/>
</dbReference>
<dbReference type="InterPro" id="IPR006673">
    <property type="entry name" value="Mnh_C1_su"/>
</dbReference>
<dbReference type="InterPro" id="IPR039428">
    <property type="entry name" value="NUOK/Mnh_C1-like"/>
</dbReference>
<dbReference type="NCBIfam" id="TIGR00941">
    <property type="entry name" value="2a6301s03"/>
    <property type="match status" value="1"/>
</dbReference>
<dbReference type="NCBIfam" id="NF006372">
    <property type="entry name" value="PRK08600.1"/>
    <property type="match status" value="1"/>
</dbReference>
<dbReference type="NCBIfam" id="NF006573">
    <property type="entry name" value="PRK09094.1"/>
    <property type="match status" value="1"/>
</dbReference>
<dbReference type="NCBIfam" id="NF009303">
    <property type="entry name" value="PRK12660.1"/>
    <property type="match status" value="1"/>
</dbReference>
<dbReference type="PANTHER" id="PTHR34583">
    <property type="entry name" value="ANTIPORTER SUBUNIT MNHC2-RELATED"/>
    <property type="match status" value="1"/>
</dbReference>
<dbReference type="PANTHER" id="PTHR34583:SF2">
    <property type="entry name" value="ANTIPORTER SUBUNIT MNHC2-RELATED"/>
    <property type="match status" value="1"/>
</dbReference>
<dbReference type="Pfam" id="PF00420">
    <property type="entry name" value="Oxidored_q2"/>
    <property type="match status" value="1"/>
</dbReference>
<organism>
    <name type="scientific">Staphylococcus aureus (strain COL)</name>
    <dbReference type="NCBI Taxonomy" id="93062"/>
    <lineage>
        <taxon>Bacteria</taxon>
        <taxon>Bacillati</taxon>
        <taxon>Bacillota</taxon>
        <taxon>Bacilli</taxon>
        <taxon>Bacillales</taxon>
        <taxon>Staphylococcaceae</taxon>
        <taxon>Staphylococcus</taxon>
    </lineage>
</organism>
<proteinExistence type="inferred from homology"/>
<reference key="1">
    <citation type="journal article" date="2005" name="J. Bacteriol.">
        <title>Insights on evolution of virulence and resistance from the complete genome analysis of an early methicillin-resistant Staphylococcus aureus strain and a biofilm-producing methicillin-resistant Staphylococcus epidermidis strain.</title>
        <authorList>
            <person name="Gill S.R."/>
            <person name="Fouts D.E."/>
            <person name="Archer G.L."/>
            <person name="Mongodin E.F."/>
            <person name="DeBoy R.T."/>
            <person name="Ravel J."/>
            <person name="Paulsen I.T."/>
            <person name="Kolonay J.F."/>
            <person name="Brinkac L.M."/>
            <person name="Beanan M.J."/>
            <person name="Dodson R.J."/>
            <person name="Daugherty S.C."/>
            <person name="Madupu R."/>
            <person name="Angiuoli S.V."/>
            <person name="Durkin A.S."/>
            <person name="Haft D.H."/>
            <person name="Vamathevan J.J."/>
            <person name="Khouri H."/>
            <person name="Utterback T.R."/>
            <person name="Lee C."/>
            <person name="Dimitrov G."/>
            <person name="Jiang L."/>
            <person name="Qin H."/>
            <person name="Weidman J."/>
            <person name="Tran K."/>
            <person name="Kang K.H."/>
            <person name="Hance I.R."/>
            <person name="Nelson K.E."/>
            <person name="Fraser C.M."/>
        </authorList>
    </citation>
    <scope>NUCLEOTIDE SEQUENCE [LARGE SCALE GENOMIC DNA]</scope>
    <source>
        <strain>COL</strain>
    </source>
</reference>
<protein>
    <recommendedName>
        <fullName>Na(+)/H(+) antiporter subunit C1</fullName>
    </recommendedName>
    <alternativeName>
        <fullName>Mnh complex subunit C1</fullName>
    </alternativeName>
</protein>
<comment type="function">
    <text evidence="1">Mnh complex is a Na(+)/H(+) antiporter involved in Na(+) excretion.</text>
</comment>
<comment type="subunit">
    <text evidence="1">May form a heterooligomeric complex that consists of seven subunits: mnhA1, mnhB1, mnhC1, mnhD1, mnhE1, mnhF1 and mnhG1.</text>
</comment>
<comment type="subcellular location">
    <subcellularLocation>
        <location evidence="3">Cell membrane</location>
        <topology evidence="3">Multi-pass membrane protein</topology>
    </subcellularLocation>
</comment>
<comment type="similarity">
    <text evidence="3">Belongs to the CPA3 antiporters (TC 2.A.63) subunit C family.</text>
</comment>
<sequence>MEIIMIFVSGILTAISVYLVLSKSLIRIVMGTTLLTHAANLFLITMGGLKHGTVPIYEANVKSYVDPIPQALILTAIVIAFATTAFFLVLAFRTYKELGTDNVESMKGVPEDD</sequence>